<feature type="chain" id="PRO_0000454742" description="Protein YtgB">
    <location>
        <begin position="1"/>
        <end position="18"/>
    </location>
</feature>
<comment type="induction">
    <text evidence="1">Identified when cells are grown in rich medium (at protein level).</text>
</comment>
<gene>
    <name evidence="2" type="primary">ytgB</name>
    <name evidence="3" type="ordered locus">b4822</name>
</gene>
<name>YTGB_ECOLI</name>
<protein>
    <recommendedName>
        <fullName evidence="2">Protein YtgB</fullName>
    </recommendedName>
</protein>
<organism>
    <name type="scientific">Escherichia coli (strain K12)</name>
    <dbReference type="NCBI Taxonomy" id="83333"/>
    <lineage>
        <taxon>Bacteria</taxon>
        <taxon>Pseudomonadati</taxon>
        <taxon>Pseudomonadota</taxon>
        <taxon>Gammaproteobacteria</taxon>
        <taxon>Enterobacterales</taxon>
        <taxon>Enterobacteriaceae</taxon>
        <taxon>Escherichia</taxon>
    </lineage>
</organism>
<keyword id="KW-1185">Reference proteome</keyword>
<accession>P0DV21</accession>
<dbReference type="EMBL" id="U00096">
    <property type="protein sequence ID" value="UMR55119.1"/>
    <property type="molecule type" value="Genomic_DNA"/>
</dbReference>
<dbReference type="InParanoid" id="P0DV21"/>
<dbReference type="BioCyc" id="EcoCyc:MONOMER0-4549"/>
<dbReference type="Proteomes" id="UP000000625">
    <property type="component" value="Chromosome"/>
</dbReference>
<reference key="1">
    <citation type="journal article" date="1997" name="Science">
        <title>The complete genome sequence of Escherichia coli K-12.</title>
        <authorList>
            <person name="Blattner F.R."/>
            <person name="Plunkett G. III"/>
            <person name="Bloch C.A."/>
            <person name="Perna N.T."/>
            <person name="Burland V."/>
            <person name="Riley M."/>
            <person name="Collado-Vides J."/>
            <person name="Glasner J.D."/>
            <person name="Rode C.K."/>
            <person name="Mayhew G.F."/>
            <person name="Gregor J."/>
            <person name="Davis N.W."/>
            <person name="Kirkpatrick H.A."/>
            <person name="Goeden M.A."/>
            <person name="Rose D.J."/>
            <person name="Mau B."/>
            <person name="Shao Y."/>
        </authorList>
    </citation>
    <scope>NUCLEOTIDE SEQUENCE [LARGE SCALE GENOMIC DNA]</scope>
    <source>
        <strain>K12 / MG1655 / ATCC 47076</strain>
    </source>
</reference>
<reference key="2">
    <citation type="journal article" date="2022" name="J. Bacteriol.">
        <title>Identification of novel translated small ORFs in Escherichia coli using complementary ribosome profiling approaches.</title>
        <authorList>
            <person name="Stringer A."/>
            <person name="Smith C."/>
            <person name="Mangano K."/>
            <person name="Wade J.T."/>
        </authorList>
    </citation>
    <scope>IDENTIFICATION</scope>
    <source>
        <strain>K12 / MG1655 / ATCC 47076</strain>
    </source>
</reference>
<proteinExistence type="evidence at protein level"/>
<sequence>MLILTLLRHWHVRTKSER</sequence>
<evidence type="ECO:0000269" key="1">
    <source>
    </source>
</evidence>
<evidence type="ECO:0000303" key="2">
    <source>
    </source>
</evidence>
<evidence type="ECO:0000312" key="3">
    <source>
        <dbReference type="EMBL" id="UMR55119.1"/>
    </source>
</evidence>